<protein>
    <recommendedName>
        <fullName>Kelch-like protein 41a</fullName>
    </recommendedName>
    <alternativeName>
        <fullName>Kelch repeat and BTB domain-containing protein 10b</fullName>
    </alternativeName>
</protein>
<sequence>MEPMSVKEDLRLFQSTLLQDGLKELLKENKFVDCILKVGDRSLPCHRLIMAACSPYFRELYFTEDGTEKKDANKEVVLENVDPNIMDMIVNYLYSADIDITDDNVQDVFAVANKFQIPSVFTVCVNYLQNKLSLGNCLAIFRMGLVLNCPRLAVSARDFIAEHFETLSKDEEFLEFNAPEFFAIIGCDALNVEKEELVFELLMKWVRKNKENRAKALGDAFEHIRFRLLPEKYLKEKVEKDDIIKADPELIKKLKVIKDAFAGKLPQIKEGEKEGEGENELPGFLNDSQRLGMFNRDLILMINDTAAVAYDANENECFLAAMAEQIPRNHVSITSKKNLLYVAGGLFVDEENKDSPLQCYFYQMDPHSPNWIALPPMPSPRCLFAMGEFENLLFAVAGKDLQSNESLDSVLCYDVDKMKWLETKKLPLRIHGHSVISQNGLVYCIGGKTDENKTINKMFAYNHKKSEWKELAAMKTPRSMFGATVHKGKIVVVGGVNEDGLLSSCEAYDFGTNKWEVFAEFAQERSSVNVLSVDGVLYAVAGFTIKENEDKQCVPSEITDIWQYEEDKKQWSGMIGEMRYASGASCVSMRLNVAKMPKL</sequence>
<reference key="1">
    <citation type="journal article" date="2013" name="Nature">
        <title>The zebrafish reference genome sequence and its relationship to the human genome.</title>
        <authorList>
            <person name="Howe K."/>
            <person name="Clark M.D."/>
            <person name="Torroja C.F."/>
            <person name="Torrance J."/>
            <person name="Berthelot C."/>
            <person name="Muffato M."/>
            <person name="Collins J.E."/>
            <person name="Humphray S."/>
            <person name="McLaren K."/>
            <person name="Matthews L."/>
            <person name="McLaren S."/>
            <person name="Sealy I."/>
            <person name="Caccamo M."/>
            <person name="Churcher C."/>
            <person name="Scott C."/>
            <person name="Barrett J.C."/>
            <person name="Koch R."/>
            <person name="Rauch G.J."/>
            <person name="White S."/>
            <person name="Chow W."/>
            <person name="Kilian B."/>
            <person name="Quintais L.T."/>
            <person name="Guerra-Assuncao J.A."/>
            <person name="Zhou Y."/>
            <person name="Gu Y."/>
            <person name="Yen J."/>
            <person name="Vogel J.H."/>
            <person name="Eyre T."/>
            <person name="Redmond S."/>
            <person name="Banerjee R."/>
            <person name="Chi J."/>
            <person name="Fu B."/>
            <person name="Langley E."/>
            <person name="Maguire S.F."/>
            <person name="Laird G.K."/>
            <person name="Lloyd D."/>
            <person name="Kenyon E."/>
            <person name="Donaldson S."/>
            <person name="Sehra H."/>
            <person name="Almeida-King J."/>
            <person name="Loveland J."/>
            <person name="Trevanion S."/>
            <person name="Jones M."/>
            <person name="Quail M."/>
            <person name="Willey D."/>
            <person name="Hunt A."/>
            <person name="Burton J."/>
            <person name="Sims S."/>
            <person name="McLay K."/>
            <person name="Plumb B."/>
            <person name="Davis J."/>
            <person name="Clee C."/>
            <person name="Oliver K."/>
            <person name="Clark R."/>
            <person name="Riddle C."/>
            <person name="Elliot D."/>
            <person name="Threadgold G."/>
            <person name="Harden G."/>
            <person name="Ware D."/>
            <person name="Begum S."/>
            <person name="Mortimore B."/>
            <person name="Kerry G."/>
            <person name="Heath P."/>
            <person name="Phillimore B."/>
            <person name="Tracey A."/>
            <person name="Corby N."/>
            <person name="Dunn M."/>
            <person name="Johnson C."/>
            <person name="Wood J."/>
            <person name="Clark S."/>
            <person name="Pelan S."/>
            <person name="Griffiths G."/>
            <person name="Smith M."/>
            <person name="Glithero R."/>
            <person name="Howden P."/>
            <person name="Barker N."/>
            <person name="Lloyd C."/>
            <person name="Stevens C."/>
            <person name="Harley J."/>
            <person name="Holt K."/>
            <person name="Panagiotidis G."/>
            <person name="Lovell J."/>
            <person name="Beasley H."/>
            <person name="Henderson C."/>
            <person name="Gordon D."/>
            <person name="Auger K."/>
            <person name="Wright D."/>
            <person name="Collins J."/>
            <person name="Raisen C."/>
            <person name="Dyer L."/>
            <person name="Leung K."/>
            <person name="Robertson L."/>
            <person name="Ambridge K."/>
            <person name="Leongamornlert D."/>
            <person name="McGuire S."/>
            <person name="Gilderthorp R."/>
            <person name="Griffiths C."/>
            <person name="Manthravadi D."/>
            <person name="Nichol S."/>
            <person name="Barker G."/>
            <person name="Whitehead S."/>
            <person name="Kay M."/>
            <person name="Brown J."/>
            <person name="Murnane C."/>
            <person name="Gray E."/>
            <person name="Humphries M."/>
            <person name="Sycamore N."/>
            <person name="Barker D."/>
            <person name="Saunders D."/>
            <person name="Wallis J."/>
            <person name="Babbage A."/>
            <person name="Hammond S."/>
            <person name="Mashreghi-Mohammadi M."/>
            <person name="Barr L."/>
            <person name="Martin S."/>
            <person name="Wray P."/>
            <person name="Ellington A."/>
            <person name="Matthews N."/>
            <person name="Ellwood M."/>
            <person name="Woodmansey R."/>
            <person name="Clark G."/>
            <person name="Cooper J."/>
            <person name="Tromans A."/>
            <person name="Grafham D."/>
            <person name="Skuce C."/>
            <person name="Pandian R."/>
            <person name="Andrews R."/>
            <person name="Harrison E."/>
            <person name="Kimberley A."/>
            <person name="Garnett J."/>
            <person name="Fosker N."/>
            <person name="Hall R."/>
            <person name="Garner P."/>
            <person name="Kelly D."/>
            <person name="Bird C."/>
            <person name="Palmer S."/>
            <person name="Gehring I."/>
            <person name="Berger A."/>
            <person name="Dooley C.M."/>
            <person name="Ersan-Urun Z."/>
            <person name="Eser C."/>
            <person name="Geiger H."/>
            <person name="Geisler M."/>
            <person name="Karotki L."/>
            <person name="Kirn A."/>
            <person name="Konantz J."/>
            <person name="Konantz M."/>
            <person name="Oberlander M."/>
            <person name="Rudolph-Geiger S."/>
            <person name="Teucke M."/>
            <person name="Lanz C."/>
            <person name="Raddatz G."/>
            <person name="Osoegawa K."/>
            <person name="Zhu B."/>
            <person name="Rapp A."/>
            <person name="Widaa S."/>
            <person name="Langford C."/>
            <person name="Yang F."/>
            <person name="Schuster S.C."/>
            <person name="Carter N.P."/>
            <person name="Harrow J."/>
            <person name="Ning Z."/>
            <person name="Herrero J."/>
            <person name="Searle S.M."/>
            <person name="Enright A."/>
            <person name="Geisler R."/>
            <person name="Plasterk R.H."/>
            <person name="Lee C."/>
            <person name="Westerfield M."/>
            <person name="de Jong P.J."/>
            <person name="Zon L.I."/>
            <person name="Postlethwait J.H."/>
            <person name="Nusslein-Volhard C."/>
            <person name="Hubbard T.J."/>
            <person name="Roest Crollius H."/>
            <person name="Rogers J."/>
            <person name="Stemple D.L."/>
        </authorList>
    </citation>
    <scope>NUCLEOTIDE SEQUENCE [LARGE SCALE GENOMIC DNA]</scope>
    <source>
        <strain>Tuebingen</strain>
    </source>
</reference>
<reference key="2">
    <citation type="journal article" date="2013" name="Am. J. Hum. Genet.">
        <title>Identification of KLHL41 mutations implicates BTB-Kelch-mediated ubiquitination as an alternate pathway to myofibrillar disruption in nemaline myopathy.</title>
        <authorList>
            <person name="Gupta V.A."/>
            <person name="Ravenscroft G."/>
            <person name="Shaheen R."/>
            <person name="Todd E.J."/>
            <person name="Swanson L.C."/>
            <person name="Shiina M."/>
            <person name="Ogata K."/>
            <person name="Hsu C."/>
            <person name="Clarke N.F."/>
            <person name="Darras B.T."/>
            <person name="Farrar M.A."/>
            <person name="Hashem A."/>
            <person name="Manton N.D."/>
            <person name="Muntoni F."/>
            <person name="North K.N."/>
            <person name="Sandaradura S.A."/>
            <person name="Nishino I."/>
            <person name="Hayashi Y.K."/>
            <person name="Sewry C.A."/>
            <person name="Thompson E.M."/>
            <person name="Yau K.S."/>
            <person name="Brownstein C.A."/>
            <person name="Yu T.W."/>
            <person name="Allcock R.J."/>
            <person name="Davis M.R."/>
            <person name="Wallgren-Pettersson C."/>
            <person name="Matsumoto N."/>
            <person name="Alkuraya F.S."/>
            <person name="Laing N.G."/>
            <person name="Beggs A.H."/>
        </authorList>
    </citation>
    <scope>DEVELOPMENTAL STAGE</scope>
    <scope>DISRUPTION PHENOTYPE</scope>
    <scope>FUNCTION</scope>
</reference>
<evidence type="ECO:0000250" key="1">
    <source>
        <dbReference type="UniProtKB" id="A2AUC9"/>
    </source>
</evidence>
<evidence type="ECO:0000250" key="2">
    <source>
        <dbReference type="UniProtKB" id="O60662"/>
    </source>
</evidence>
<evidence type="ECO:0000255" key="3"/>
<evidence type="ECO:0000255" key="4">
    <source>
        <dbReference type="PROSITE-ProRule" id="PRU00037"/>
    </source>
</evidence>
<evidence type="ECO:0000269" key="5">
    <source>
    </source>
</evidence>
<evidence type="ECO:0000312" key="6">
    <source>
        <dbReference type="ZFIN" id="ZDB-GENE-081105-22"/>
    </source>
</evidence>
<proteinExistence type="evidence at transcript level"/>
<keyword id="KW-0963">Cytoplasm</keyword>
<keyword id="KW-0206">Cytoskeleton</keyword>
<keyword id="KW-0256">Endoplasmic reticulum</keyword>
<keyword id="KW-0880">Kelch repeat</keyword>
<keyword id="KW-0472">Membrane</keyword>
<keyword id="KW-1185">Reference proteome</keyword>
<keyword id="KW-0677">Repeat</keyword>
<keyword id="KW-0703">Sarcoplasmic reticulum</keyword>
<gene>
    <name type="primary">klhl41a</name>
    <name evidence="6" type="synonym">kbtbd10a</name>
</gene>
<comment type="function">
    <text evidence="5">Involved in skeletal muscle development and differentiation.</text>
</comment>
<comment type="subcellular location">
    <subcellularLocation>
        <location evidence="2">Cytoplasm</location>
    </subcellularLocation>
    <subcellularLocation>
        <location evidence="1">Cytoplasm</location>
        <location evidence="1">Cytoskeleton</location>
    </subcellularLocation>
    <subcellularLocation>
        <location evidence="2">Sarcoplasmic reticulum membrane</location>
    </subcellularLocation>
    <subcellularLocation>
        <location evidence="2">Endoplasmic reticulum membrane</location>
    </subcellularLocation>
</comment>
<comment type="developmental stage">
    <text evidence="5">Ubiquitous expression during early development at 1 dpf, but by 2 dpf, transcripts are virtually undetectable in the major axial skeletal muscles.</text>
</comment>
<comment type="disruption phenotype">
    <text evidence="5">Morphants exhibit leaner bodies, smaller eyes, and pericardial edema. At 3 dpf morphants show reduced birefringence in axial skeletal muscles suggesting disorganized skeletal muscle structure.</text>
</comment>
<feature type="chain" id="PRO_0000431065" description="Kelch-like protein 41a">
    <location>
        <begin position="1"/>
        <end position="599"/>
    </location>
</feature>
<feature type="domain" description="BTB" evidence="4">
    <location>
        <begin position="32"/>
        <end position="102"/>
    </location>
</feature>
<feature type="domain" description="BACK" evidence="3">
    <location>
        <begin position="137"/>
        <end position="239"/>
    </location>
</feature>
<feature type="repeat" description="Kelch 1" evidence="3">
    <location>
        <begin position="339"/>
        <end position="391"/>
    </location>
</feature>
<feature type="repeat" description="Kelch 2" evidence="3">
    <location>
        <begin position="393"/>
        <end position="440"/>
    </location>
</feature>
<feature type="repeat" description="Kelch 3" evidence="3">
    <location>
        <begin position="441"/>
        <end position="488"/>
    </location>
</feature>
<feature type="repeat" description="Kelch 4" evidence="3">
    <location>
        <begin position="489"/>
        <end position="535"/>
    </location>
</feature>
<feature type="repeat" description="Kelch 5" evidence="3">
    <location>
        <begin position="537"/>
        <end position="591"/>
    </location>
</feature>
<name>KL41A_DANRE</name>
<dbReference type="EMBL" id="BX321905">
    <property type="status" value="NOT_ANNOTATED_CDS"/>
    <property type="molecule type" value="Genomic_DNA"/>
</dbReference>
<dbReference type="RefSeq" id="NP_001410756.1">
    <property type="nucleotide sequence ID" value="NM_001423827.1"/>
</dbReference>
<dbReference type="RefSeq" id="XP_001922967.1">
    <property type="nucleotide sequence ID" value="XM_001922932.6"/>
</dbReference>
<dbReference type="SMR" id="E9QIN8"/>
<dbReference type="FunCoup" id="E9QIN8">
    <property type="interactions" value="425"/>
</dbReference>
<dbReference type="STRING" id="7955.ENSDARP00000090560"/>
<dbReference type="PaxDb" id="7955-ENSDARP00000090560"/>
<dbReference type="PeptideAtlas" id="E9QIN8"/>
<dbReference type="Ensembl" id="ENSDART00000099787">
    <property type="protein sequence ID" value="ENSDARP00000090560"/>
    <property type="gene ID" value="ENSDARG00000068888"/>
</dbReference>
<dbReference type="GeneID" id="100148315"/>
<dbReference type="AGR" id="ZFIN:ZDB-GENE-081105-22"/>
<dbReference type="ZFIN" id="ZDB-GENE-081105-22">
    <property type="gene designation" value="klhl41a"/>
</dbReference>
<dbReference type="eggNOG" id="KOG4441">
    <property type="taxonomic scope" value="Eukaryota"/>
</dbReference>
<dbReference type="HOGENOM" id="CLU_004253_14_4_1"/>
<dbReference type="InParanoid" id="E9QIN8"/>
<dbReference type="OMA" id="KEWTGMI"/>
<dbReference type="OrthoDB" id="6359816at2759"/>
<dbReference type="PhylomeDB" id="E9QIN8"/>
<dbReference type="TreeFam" id="TF351653"/>
<dbReference type="PRO" id="PR:E9QIN8"/>
<dbReference type="Proteomes" id="UP000000437">
    <property type="component" value="Chromosome 9"/>
</dbReference>
<dbReference type="Bgee" id="ENSDARG00000068888">
    <property type="expression patterns" value="Expressed in muscle tissue and 19 other cell types or tissues"/>
</dbReference>
<dbReference type="GO" id="GO:0031463">
    <property type="term" value="C:Cul3-RING ubiquitin ligase complex"/>
    <property type="evidence" value="ECO:0000318"/>
    <property type="project" value="GO_Central"/>
</dbReference>
<dbReference type="GO" id="GO:0005737">
    <property type="term" value="C:cytoplasm"/>
    <property type="evidence" value="ECO:0000318"/>
    <property type="project" value="GO_Central"/>
</dbReference>
<dbReference type="GO" id="GO:0005856">
    <property type="term" value="C:cytoskeleton"/>
    <property type="evidence" value="ECO:0000318"/>
    <property type="project" value="GO_Central"/>
</dbReference>
<dbReference type="GO" id="GO:0031430">
    <property type="term" value="C:M band"/>
    <property type="evidence" value="ECO:0000318"/>
    <property type="project" value="GO_Central"/>
</dbReference>
<dbReference type="GO" id="GO:0033017">
    <property type="term" value="C:sarcoplasmic reticulum membrane"/>
    <property type="evidence" value="ECO:0000318"/>
    <property type="project" value="GO_Central"/>
</dbReference>
<dbReference type="GO" id="GO:1990756">
    <property type="term" value="F:ubiquitin-like ligase-substrate adaptor activity"/>
    <property type="evidence" value="ECO:0000318"/>
    <property type="project" value="GO_Central"/>
</dbReference>
<dbReference type="GO" id="GO:0043161">
    <property type="term" value="P:proteasome-mediated ubiquitin-dependent protein catabolic process"/>
    <property type="evidence" value="ECO:0000318"/>
    <property type="project" value="GO_Central"/>
</dbReference>
<dbReference type="GO" id="GO:0060297">
    <property type="term" value="P:regulation of sarcomere organization"/>
    <property type="evidence" value="ECO:0000316"/>
    <property type="project" value="ZFIN"/>
</dbReference>
<dbReference type="GO" id="GO:0045214">
    <property type="term" value="P:sarcomere organization"/>
    <property type="evidence" value="ECO:0000315"/>
    <property type="project" value="ZFIN"/>
</dbReference>
<dbReference type="GO" id="GO:0048741">
    <property type="term" value="P:skeletal muscle fiber development"/>
    <property type="evidence" value="ECO:0000315"/>
    <property type="project" value="ZFIN"/>
</dbReference>
<dbReference type="GO" id="GO:0036269">
    <property type="term" value="P:swimming behavior"/>
    <property type="evidence" value="ECO:0000316"/>
    <property type="project" value="ZFIN"/>
</dbReference>
<dbReference type="CDD" id="cd18477">
    <property type="entry name" value="BACK_KLHL40_like"/>
    <property type="match status" value="1"/>
</dbReference>
<dbReference type="FunFam" id="3.30.710.10:FF:000006">
    <property type="entry name" value="Kelch repeat and BTB domain-containing 6"/>
    <property type="match status" value="1"/>
</dbReference>
<dbReference type="FunFam" id="1.25.40.420:FF:000001">
    <property type="entry name" value="Kelch-like family member 12"/>
    <property type="match status" value="1"/>
</dbReference>
<dbReference type="FunFam" id="2.120.10.80:FF:000025">
    <property type="entry name" value="Kelch-like family member 41"/>
    <property type="match status" value="1"/>
</dbReference>
<dbReference type="Gene3D" id="1.25.40.420">
    <property type="match status" value="1"/>
</dbReference>
<dbReference type="Gene3D" id="2.120.10.80">
    <property type="entry name" value="Kelch-type beta propeller"/>
    <property type="match status" value="1"/>
</dbReference>
<dbReference type="Gene3D" id="3.30.710.10">
    <property type="entry name" value="Potassium Channel Kv1.1, Chain A"/>
    <property type="match status" value="1"/>
</dbReference>
<dbReference type="InterPro" id="IPR011705">
    <property type="entry name" value="BACK"/>
</dbReference>
<dbReference type="InterPro" id="IPR017096">
    <property type="entry name" value="BTB-kelch_protein"/>
</dbReference>
<dbReference type="InterPro" id="IPR000210">
    <property type="entry name" value="BTB/POZ_dom"/>
</dbReference>
<dbReference type="InterPro" id="IPR015915">
    <property type="entry name" value="Kelch-typ_b-propeller"/>
</dbReference>
<dbReference type="InterPro" id="IPR006652">
    <property type="entry name" value="Kelch_1"/>
</dbReference>
<dbReference type="InterPro" id="IPR011333">
    <property type="entry name" value="SKP1/BTB/POZ_sf"/>
</dbReference>
<dbReference type="PANTHER" id="PTHR24412">
    <property type="entry name" value="KELCH PROTEIN"/>
    <property type="match status" value="1"/>
</dbReference>
<dbReference type="PANTHER" id="PTHR24412:SF146">
    <property type="entry name" value="KELCH-LIKE PROTEIN 41"/>
    <property type="match status" value="1"/>
</dbReference>
<dbReference type="Pfam" id="PF07707">
    <property type="entry name" value="BACK"/>
    <property type="match status" value="1"/>
</dbReference>
<dbReference type="Pfam" id="PF00651">
    <property type="entry name" value="BTB"/>
    <property type="match status" value="1"/>
</dbReference>
<dbReference type="Pfam" id="PF24681">
    <property type="entry name" value="Kelch_KLHDC2_KLHL20_DRC7"/>
    <property type="match status" value="1"/>
</dbReference>
<dbReference type="PIRSF" id="PIRSF037037">
    <property type="entry name" value="Kelch-like_protein_gigaxonin"/>
    <property type="match status" value="1"/>
</dbReference>
<dbReference type="SMART" id="SM00875">
    <property type="entry name" value="BACK"/>
    <property type="match status" value="1"/>
</dbReference>
<dbReference type="SMART" id="SM00225">
    <property type="entry name" value="BTB"/>
    <property type="match status" value="1"/>
</dbReference>
<dbReference type="SMART" id="SM00612">
    <property type="entry name" value="Kelch"/>
    <property type="match status" value="4"/>
</dbReference>
<dbReference type="SUPFAM" id="SSF117281">
    <property type="entry name" value="Kelch motif"/>
    <property type="match status" value="1"/>
</dbReference>
<dbReference type="SUPFAM" id="SSF54695">
    <property type="entry name" value="POZ domain"/>
    <property type="match status" value="1"/>
</dbReference>
<dbReference type="PROSITE" id="PS50097">
    <property type="entry name" value="BTB"/>
    <property type="match status" value="1"/>
</dbReference>
<accession>E9QIN8</accession>
<organism>
    <name type="scientific">Danio rerio</name>
    <name type="common">Zebrafish</name>
    <name type="synonym">Brachydanio rerio</name>
    <dbReference type="NCBI Taxonomy" id="7955"/>
    <lineage>
        <taxon>Eukaryota</taxon>
        <taxon>Metazoa</taxon>
        <taxon>Chordata</taxon>
        <taxon>Craniata</taxon>
        <taxon>Vertebrata</taxon>
        <taxon>Euteleostomi</taxon>
        <taxon>Actinopterygii</taxon>
        <taxon>Neopterygii</taxon>
        <taxon>Teleostei</taxon>
        <taxon>Ostariophysi</taxon>
        <taxon>Cypriniformes</taxon>
        <taxon>Danionidae</taxon>
        <taxon>Danioninae</taxon>
        <taxon>Danio</taxon>
    </lineage>
</organism>